<reference key="1">
    <citation type="journal article" date="2009" name="Proc. Natl. Acad. Sci. U.S.A.">
        <title>Hamiltonella defensa, genome evolution of protective bacterial endosymbiont from pathogenic ancestors.</title>
        <authorList>
            <person name="Degnan P.H."/>
            <person name="Yu Y."/>
            <person name="Sisneros N."/>
            <person name="Wing R.A."/>
            <person name="Moran N.A."/>
        </authorList>
    </citation>
    <scope>NUCLEOTIDE SEQUENCE [LARGE SCALE GENOMIC DNA]</scope>
    <source>
        <strain>5AT</strain>
    </source>
</reference>
<organism>
    <name type="scientific">Hamiltonella defensa subsp. Acyrthosiphon pisum (strain 5AT)</name>
    <dbReference type="NCBI Taxonomy" id="572265"/>
    <lineage>
        <taxon>Bacteria</taxon>
        <taxon>Pseudomonadati</taxon>
        <taxon>Pseudomonadota</taxon>
        <taxon>Gammaproteobacteria</taxon>
        <taxon>Enterobacterales</taxon>
        <taxon>Enterobacteriaceae</taxon>
        <taxon>aphid secondary symbionts</taxon>
        <taxon>Candidatus Hamiltonella</taxon>
    </lineage>
</organism>
<protein>
    <recommendedName>
        <fullName evidence="1">Small ribosomal subunit protein uS11</fullName>
    </recommendedName>
    <alternativeName>
        <fullName evidence="2">30S ribosomal protein S11</fullName>
    </alternativeName>
</protein>
<comment type="function">
    <text evidence="1">Located on the platform of the 30S subunit, it bridges several disparate RNA helices of the 16S rRNA. Forms part of the Shine-Dalgarno cleft in the 70S ribosome.</text>
</comment>
<comment type="subunit">
    <text evidence="1">Part of the 30S ribosomal subunit. Interacts with proteins S7 and S18. Binds to IF-3.</text>
</comment>
<comment type="similarity">
    <text evidence="1">Belongs to the universal ribosomal protein uS11 family.</text>
</comment>
<sequence length="129" mass="13906">MAKAPIRAHKRIKRQIPNCIAHVHASFNNTIVTITDGQGNVLAWATAGGSGFRGSRKSTPFAAQVAAERCAEAVKDYGIKTLEVIVKGPGPGRESTVRAFNASGYRITSITDMTPIPHNGCRPPKRRRV</sequence>
<feature type="chain" id="PRO_1000214365" description="Small ribosomal subunit protein uS11">
    <location>
        <begin position="1"/>
        <end position="129"/>
    </location>
</feature>
<dbReference type="EMBL" id="CP001277">
    <property type="protein sequence ID" value="ACQ68438.1"/>
    <property type="molecule type" value="Genomic_DNA"/>
</dbReference>
<dbReference type="RefSeq" id="WP_015874202.1">
    <property type="nucleotide sequence ID" value="NC_012751.1"/>
</dbReference>
<dbReference type="SMR" id="C4K795"/>
<dbReference type="STRING" id="572265.HDEF_1843"/>
<dbReference type="GeneID" id="66261429"/>
<dbReference type="KEGG" id="hde:HDEF_1843"/>
<dbReference type="eggNOG" id="COG0100">
    <property type="taxonomic scope" value="Bacteria"/>
</dbReference>
<dbReference type="HOGENOM" id="CLU_072439_5_0_6"/>
<dbReference type="Proteomes" id="UP000002334">
    <property type="component" value="Chromosome"/>
</dbReference>
<dbReference type="GO" id="GO:1990904">
    <property type="term" value="C:ribonucleoprotein complex"/>
    <property type="evidence" value="ECO:0007669"/>
    <property type="project" value="UniProtKB-KW"/>
</dbReference>
<dbReference type="GO" id="GO:0005840">
    <property type="term" value="C:ribosome"/>
    <property type="evidence" value="ECO:0007669"/>
    <property type="project" value="UniProtKB-KW"/>
</dbReference>
<dbReference type="GO" id="GO:0019843">
    <property type="term" value="F:rRNA binding"/>
    <property type="evidence" value="ECO:0007669"/>
    <property type="project" value="UniProtKB-UniRule"/>
</dbReference>
<dbReference type="GO" id="GO:0003735">
    <property type="term" value="F:structural constituent of ribosome"/>
    <property type="evidence" value="ECO:0007669"/>
    <property type="project" value="InterPro"/>
</dbReference>
<dbReference type="GO" id="GO:0006412">
    <property type="term" value="P:translation"/>
    <property type="evidence" value="ECO:0007669"/>
    <property type="project" value="UniProtKB-UniRule"/>
</dbReference>
<dbReference type="FunFam" id="3.30.420.80:FF:000001">
    <property type="entry name" value="30S ribosomal protein S11"/>
    <property type="match status" value="1"/>
</dbReference>
<dbReference type="Gene3D" id="3.30.420.80">
    <property type="entry name" value="Ribosomal protein S11"/>
    <property type="match status" value="1"/>
</dbReference>
<dbReference type="HAMAP" id="MF_01310">
    <property type="entry name" value="Ribosomal_uS11"/>
    <property type="match status" value="1"/>
</dbReference>
<dbReference type="InterPro" id="IPR001971">
    <property type="entry name" value="Ribosomal_uS11"/>
</dbReference>
<dbReference type="InterPro" id="IPR019981">
    <property type="entry name" value="Ribosomal_uS11_bac-type"/>
</dbReference>
<dbReference type="InterPro" id="IPR018102">
    <property type="entry name" value="Ribosomal_uS11_CS"/>
</dbReference>
<dbReference type="InterPro" id="IPR036967">
    <property type="entry name" value="Ribosomal_uS11_sf"/>
</dbReference>
<dbReference type="NCBIfam" id="NF003698">
    <property type="entry name" value="PRK05309.1"/>
    <property type="match status" value="1"/>
</dbReference>
<dbReference type="NCBIfam" id="TIGR03632">
    <property type="entry name" value="uS11_bact"/>
    <property type="match status" value="1"/>
</dbReference>
<dbReference type="PANTHER" id="PTHR11759">
    <property type="entry name" value="40S RIBOSOMAL PROTEIN S14/30S RIBOSOMAL PROTEIN S11"/>
    <property type="match status" value="1"/>
</dbReference>
<dbReference type="Pfam" id="PF00411">
    <property type="entry name" value="Ribosomal_S11"/>
    <property type="match status" value="1"/>
</dbReference>
<dbReference type="PIRSF" id="PIRSF002131">
    <property type="entry name" value="Ribosomal_S11"/>
    <property type="match status" value="1"/>
</dbReference>
<dbReference type="SUPFAM" id="SSF53137">
    <property type="entry name" value="Translational machinery components"/>
    <property type="match status" value="1"/>
</dbReference>
<dbReference type="PROSITE" id="PS00054">
    <property type="entry name" value="RIBOSOMAL_S11"/>
    <property type="match status" value="1"/>
</dbReference>
<proteinExistence type="inferred from homology"/>
<name>RS11_HAMD5</name>
<accession>C4K795</accession>
<gene>
    <name evidence="1" type="primary">rpsK</name>
    <name type="ordered locus">HDEF_1843</name>
</gene>
<evidence type="ECO:0000255" key="1">
    <source>
        <dbReference type="HAMAP-Rule" id="MF_01310"/>
    </source>
</evidence>
<evidence type="ECO:0000305" key="2"/>
<keyword id="KW-0687">Ribonucleoprotein</keyword>
<keyword id="KW-0689">Ribosomal protein</keyword>
<keyword id="KW-0694">RNA-binding</keyword>
<keyword id="KW-0699">rRNA-binding</keyword>